<comment type="function">
    <text evidence="1">Allows the formation of correctly charged Asn-tRNA(Asn) or Gln-tRNA(Gln) through the transamidation of misacylated Asp-tRNA(Asn) or Glu-tRNA(Gln) in organisms which lack either or both of asparaginyl-tRNA or glutaminyl-tRNA synthetases. The reaction takes place in the presence of glutamine and ATP through an activated phospho-Asp-tRNA(Asn) or phospho-Glu-tRNA(Gln).</text>
</comment>
<comment type="catalytic activity">
    <reaction evidence="1">
        <text>L-glutamyl-tRNA(Gln) + L-glutamine + ATP + H2O = L-glutaminyl-tRNA(Gln) + L-glutamate + ADP + phosphate + H(+)</text>
        <dbReference type="Rhea" id="RHEA:17521"/>
        <dbReference type="Rhea" id="RHEA-COMP:9681"/>
        <dbReference type="Rhea" id="RHEA-COMP:9684"/>
        <dbReference type="ChEBI" id="CHEBI:15377"/>
        <dbReference type="ChEBI" id="CHEBI:15378"/>
        <dbReference type="ChEBI" id="CHEBI:29985"/>
        <dbReference type="ChEBI" id="CHEBI:30616"/>
        <dbReference type="ChEBI" id="CHEBI:43474"/>
        <dbReference type="ChEBI" id="CHEBI:58359"/>
        <dbReference type="ChEBI" id="CHEBI:78520"/>
        <dbReference type="ChEBI" id="CHEBI:78521"/>
        <dbReference type="ChEBI" id="CHEBI:456216"/>
    </reaction>
</comment>
<comment type="catalytic activity">
    <reaction evidence="1">
        <text>L-aspartyl-tRNA(Asn) + L-glutamine + ATP + H2O = L-asparaginyl-tRNA(Asn) + L-glutamate + ADP + phosphate + 2 H(+)</text>
        <dbReference type="Rhea" id="RHEA:14513"/>
        <dbReference type="Rhea" id="RHEA-COMP:9674"/>
        <dbReference type="Rhea" id="RHEA-COMP:9677"/>
        <dbReference type="ChEBI" id="CHEBI:15377"/>
        <dbReference type="ChEBI" id="CHEBI:15378"/>
        <dbReference type="ChEBI" id="CHEBI:29985"/>
        <dbReference type="ChEBI" id="CHEBI:30616"/>
        <dbReference type="ChEBI" id="CHEBI:43474"/>
        <dbReference type="ChEBI" id="CHEBI:58359"/>
        <dbReference type="ChEBI" id="CHEBI:78515"/>
        <dbReference type="ChEBI" id="CHEBI:78516"/>
        <dbReference type="ChEBI" id="CHEBI:456216"/>
    </reaction>
</comment>
<comment type="subunit">
    <text evidence="1">Heterotrimer of A, B and C subunits.</text>
</comment>
<comment type="similarity">
    <text evidence="1">Belongs to the GatB/GatE family. GatB subfamily.</text>
</comment>
<reference key="1">
    <citation type="journal article" date="2001" name="Proc. Natl. Acad. Sci. U.S.A.">
        <title>Complete genome sequence of an M1 strain of Streptococcus pyogenes.</title>
        <authorList>
            <person name="Ferretti J.J."/>
            <person name="McShan W.M."/>
            <person name="Ajdic D.J."/>
            <person name="Savic D.J."/>
            <person name="Savic G."/>
            <person name="Lyon K."/>
            <person name="Primeaux C."/>
            <person name="Sezate S."/>
            <person name="Suvorov A.N."/>
            <person name="Kenton S."/>
            <person name="Lai H.S."/>
            <person name="Lin S.P."/>
            <person name="Qian Y."/>
            <person name="Jia H.G."/>
            <person name="Najar F.Z."/>
            <person name="Ren Q."/>
            <person name="Zhu H."/>
            <person name="Song L."/>
            <person name="White J."/>
            <person name="Yuan X."/>
            <person name="Clifton S.W."/>
            <person name="Roe B.A."/>
            <person name="McLaughlin R.E."/>
        </authorList>
    </citation>
    <scope>NUCLEOTIDE SEQUENCE [LARGE SCALE GENOMIC DNA]</scope>
    <source>
        <strain>ATCC 700294 / SF370 / Serotype M1</strain>
    </source>
</reference>
<reference key="2">
    <citation type="journal article" date="2005" name="J. Infect. Dis.">
        <title>Evolutionary origin and emergence of a highly successful clone of serotype M1 group A Streptococcus involved multiple horizontal gene transfer events.</title>
        <authorList>
            <person name="Sumby P."/>
            <person name="Porcella S.F."/>
            <person name="Madrigal A.G."/>
            <person name="Barbian K.D."/>
            <person name="Virtaneva K."/>
            <person name="Ricklefs S.M."/>
            <person name="Sturdevant D.E."/>
            <person name="Graham M.R."/>
            <person name="Vuopio-Varkila J."/>
            <person name="Hoe N.P."/>
            <person name="Musser J.M."/>
        </authorList>
    </citation>
    <scope>NUCLEOTIDE SEQUENCE [LARGE SCALE GENOMIC DNA]</scope>
    <source>
        <strain>ATCC BAA-947 / MGAS5005 / Serotype M1</strain>
    </source>
</reference>
<organism>
    <name type="scientific">Streptococcus pyogenes serotype M1</name>
    <dbReference type="NCBI Taxonomy" id="301447"/>
    <lineage>
        <taxon>Bacteria</taxon>
        <taxon>Bacillati</taxon>
        <taxon>Bacillota</taxon>
        <taxon>Bacilli</taxon>
        <taxon>Lactobacillales</taxon>
        <taxon>Streptococcaceae</taxon>
        <taxon>Streptococcus</taxon>
    </lineage>
</organism>
<proteinExistence type="inferred from homology"/>
<protein>
    <recommendedName>
        <fullName evidence="1">Aspartyl/glutamyl-tRNA(Asn/Gln) amidotransferase subunit B</fullName>
        <shortName evidence="1">Asp/Glu-ADT subunit B</shortName>
        <ecNumber evidence="1">6.3.5.-</ecNumber>
    </recommendedName>
</protein>
<feature type="chain" id="PRO_0000148850" description="Aspartyl/glutamyl-tRNA(Asn/Gln) amidotransferase subunit B">
    <location>
        <begin position="1"/>
        <end position="479"/>
    </location>
</feature>
<keyword id="KW-0067">ATP-binding</keyword>
<keyword id="KW-0436">Ligase</keyword>
<keyword id="KW-0547">Nucleotide-binding</keyword>
<keyword id="KW-0648">Protein biosynthesis</keyword>
<keyword id="KW-1185">Reference proteome</keyword>
<gene>
    <name evidence="1" type="primary">gatB</name>
    <name type="ordered locus">SPy_1770</name>
    <name type="ordered locus">M5005_Spy1506</name>
</gene>
<dbReference type="EC" id="6.3.5.-" evidence="1"/>
<dbReference type="EMBL" id="AE004092">
    <property type="protein sequence ID" value="AAK34509.1"/>
    <property type="molecule type" value="Genomic_DNA"/>
</dbReference>
<dbReference type="EMBL" id="CP000017">
    <property type="protein sequence ID" value="AAZ52124.1"/>
    <property type="molecule type" value="Genomic_DNA"/>
</dbReference>
<dbReference type="RefSeq" id="NP_269788.1">
    <property type="nucleotide sequence ID" value="NC_002737.2"/>
</dbReference>
<dbReference type="SMR" id="Q99YC1"/>
<dbReference type="PaxDb" id="1314-HKU360_01560"/>
<dbReference type="KEGG" id="spy:SPy_1770"/>
<dbReference type="KEGG" id="spz:M5005_Spy1506"/>
<dbReference type="PATRIC" id="fig|160490.10.peg.1539"/>
<dbReference type="HOGENOM" id="CLU_019240_0_0_9"/>
<dbReference type="OMA" id="ARKWWMG"/>
<dbReference type="Proteomes" id="UP000000750">
    <property type="component" value="Chromosome"/>
</dbReference>
<dbReference type="GO" id="GO:0050566">
    <property type="term" value="F:asparaginyl-tRNA synthase (glutamine-hydrolyzing) activity"/>
    <property type="evidence" value="ECO:0007669"/>
    <property type="project" value="RHEA"/>
</dbReference>
<dbReference type="GO" id="GO:0005524">
    <property type="term" value="F:ATP binding"/>
    <property type="evidence" value="ECO:0007669"/>
    <property type="project" value="UniProtKB-KW"/>
</dbReference>
<dbReference type="GO" id="GO:0050567">
    <property type="term" value="F:glutaminyl-tRNA synthase (glutamine-hydrolyzing) activity"/>
    <property type="evidence" value="ECO:0007669"/>
    <property type="project" value="UniProtKB-UniRule"/>
</dbReference>
<dbReference type="GO" id="GO:0070681">
    <property type="term" value="P:glutaminyl-tRNAGln biosynthesis via transamidation"/>
    <property type="evidence" value="ECO:0007669"/>
    <property type="project" value="TreeGrafter"/>
</dbReference>
<dbReference type="GO" id="GO:0006412">
    <property type="term" value="P:translation"/>
    <property type="evidence" value="ECO:0007669"/>
    <property type="project" value="UniProtKB-UniRule"/>
</dbReference>
<dbReference type="FunFam" id="1.10.10.410:FF:000001">
    <property type="entry name" value="Aspartyl/glutamyl-tRNA(Asn/Gln) amidotransferase subunit B"/>
    <property type="match status" value="1"/>
</dbReference>
<dbReference type="FunFam" id="1.10.150.380:FF:000001">
    <property type="entry name" value="Aspartyl/glutamyl-tRNA(Asn/Gln) amidotransferase subunit B"/>
    <property type="match status" value="1"/>
</dbReference>
<dbReference type="Gene3D" id="1.10.10.410">
    <property type="match status" value="1"/>
</dbReference>
<dbReference type="Gene3D" id="1.10.150.380">
    <property type="entry name" value="GatB domain, N-terminal subdomain"/>
    <property type="match status" value="1"/>
</dbReference>
<dbReference type="HAMAP" id="MF_00121">
    <property type="entry name" value="GatB"/>
    <property type="match status" value="1"/>
</dbReference>
<dbReference type="InterPro" id="IPR017959">
    <property type="entry name" value="Asn/Gln-tRNA_amidoTrfase_suB/E"/>
</dbReference>
<dbReference type="InterPro" id="IPR006075">
    <property type="entry name" value="Asn/Gln-tRNA_Trfase_suB/E_cat"/>
</dbReference>
<dbReference type="InterPro" id="IPR018027">
    <property type="entry name" value="Asn/Gln_amidotransferase"/>
</dbReference>
<dbReference type="InterPro" id="IPR003789">
    <property type="entry name" value="Asn/Gln_tRNA_amidoTrase-B-like"/>
</dbReference>
<dbReference type="InterPro" id="IPR004413">
    <property type="entry name" value="GatB"/>
</dbReference>
<dbReference type="InterPro" id="IPR042114">
    <property type="entry name" value="GatB_C_1"/>
</dbReference>
<dbReference type="InterPro" id="IPR023168">
    <property type="entry name" value="GatB_Yqey_C_2"/>
</dbReference>
<dbReference type="InterPro" id="IPR017958">
    <property type="entry name" value="Gln-tRNA_amidoTrfase_suB_CS"/>
</dbReference>
<dbReference type="InterPro" id="IPR014746">
    <property type="entry name" value="Gln_synth/guanido_kin_cat_dom"/>
</dbReference>
<dbReference type="NCBIfam" id="TIGR00133">
    <property type="entry name" value="gatB"/>
    <property type="match status" value="1"/>
</dbReference>
<dbReference type="NCBIfam" id="NF004011">
    <property type="entry name" value="PRK05477.1-1"/>
    <property type="match status" value="1"/>
</dbReference>
<dbReference type="NCBIfam" id="NF004012">
    <property type="entry name" value="PRK05477.1-2"/>
    <property type="match status" value="1"/>
</dbReference>
<dbReference type="NCBIfam" id="NF004014">
    <property type="entry name" value="PRK05477.1-4"/>
    <property type="match status" value="1"/>
</dbReference>
<dbReference type="PANTHER" id="PTHR11659">
    <property type="entry name" value="GLUTAMYL-TRNA GLN AMIDOTRANSFERASE SUBUNIT B MITOCHONDRIAL AND PROKARYOTIC PET112-RELATED"/>
    <property type="match status" value="1"/>
</dbReference>
<dbReference type="PANTHER" id="PTHR11659:SF0">
    <property type="entry name" value="GLUTAMYL-TRNA(GLN) AMIDOTRANSFERASE SUBUNIT B, MITOCHONDRIAL"/>
    <property type="match status" value="1"/>
</dbReference>
<dbReference type="Pfam" id="PF02934">
    <property type="entry name" value="GatB_N"/>
    <property type="match status" value="1"/>
</dbReference>
<dbReference type="Pfam" id="PF02637">
    <property type="entry name" value="GatB_Yqey"/>
    <property type="match status" value="1"/>
</dbReference>
<dbReference type="SMART" id="SM00845">
    <property type="entry name" value="GatB_Yqey"/>
    <property type="match status" value="1"/>
</dbReference>
<dbReference type="SUPFAM" id="SSF89095">
    <property type="entry name" value="GatB/YqeY motif"/>
    <property type="match status" value="1"/>
</dbReference>
<dbReference type="SUPFAM" id="SSF55931">
    <property type="entry name" value="Glutamine synthetase/guanido kinase"/>
    <property type="match status" value="1"/>
</dbReference>
<dbReference type="PROSITE" id="PS01234">
    <property type="entry name" value="GATB"/>
    <property type="match status" value="1"/>
</dbReference>
<name>GATB_STRP1</name>
<evidence type="ECO:0000255" key="1">
    <source>
        <dbReference type="HAMAP-Rule" id="MF_00121"/>
    </source>
</evidence>
<accession>Q99YC1</accession>
<accession>Q48X01</accession>
<sequence>MNFETIIGLEVHVELNTNSKIFSPSSAHFGEDPNANTNVIDWSFPGVLPVMNKGVIDAGIKAALALNMDIHKEMHFDRKNYFYPDNPKAYQISQFDEPIGYNGWIDIKLEDGSTKKIRIERAHLEEDAGKNTHGTDGYSYVDLNRQGVPLIEIVSEADMRSPEEAYAYLTALKEIIQYTGISDVKMEEGSMRVDANISLRPYGQEQFGTKTELKNLNSFSNVRKGLEFEVERQAKLLRSGGVIRQETRRYDEANKGTILMRVKEGAADYRYFPEPDLPLYEIDDAWIDEMRAQLPQFPAQRRAKYEEELGLSAYDASQLTATKVLSDFFETAVSLGGDAKQVSNWLQGEVAQFLNAEGKTIEEIALTPENLVEMIAIIADGTISSKMAKKVFVHLAKNGGSARAYVEKAGLVQISDPAVLVPIIHQVFADNEAAVADFKSGKRNADKAFTGFLMKATKGQANPQVAQQLLAQELQKLRD</sequence>